<evidence type="ECO:0000255" key="1">
    <source>
        <dbReference type="HAMAP-Rule" id="MF_00974"/>
    </source>
</evidence>
<proteinExistence type="inferred from homology"/>
<accession>Q92FZ7</accession>
<dbReference type="EC" id="2.7.7.101" evidence="1"/>
<dbReference type="EMBL" id="AE006914">
    <property type="protein sequence ID" value="AAL03868.1"/>
    <property type="molecule type" value="Genomic_DNA"/>
</dbReference>
<dbReference type="PIR" id="B97866">
    <property type="entry name" value="B97866"/>
</dbReference>
<dbReference type="RefSeq" id="WP_010977885.1">
    <property type="nucleotide sequence ID" value="NC_003103.1"/>
</dbReference>
<dbReference type="SMR" id="Q92FZ7"/>
<dbReference type="GeneID" id="928481"/>
<dbReference type="KEGG" id="rco:RC1330"/>
<dbReference type="HOGENOM" id="CLU_013501_5_3_5"/>
<dbReference type="Proteomes" id="UP000000816">
    <property type="component" value="Chromosome"/>
</dbReference>
<dbReference type="GO" id="GO:0005737">
    <property type="term" value="C:cytoplasm"/>
    <property type="evidence" value="ECO:0007669"/>
    <property type="project" value="TreeGrafter"/>
</dbReference>
<dbReference type="GO" id="GO:0000428">
    <property type="term" value="C:DNA-directed RNA polymerase complex"/>
    <property type="evidence" value="ECO:0007669"/>
    <property type="project" value="UniProtKB-KW"/>
</dbReference>
<dbReference type="GO" id="GO:1990077">
    <property type="term" value="C:primosome complex"/>
    <property type="evidence" value="ECO:0007669"/>
    <property type="project" value="UniProtKB-KW"/>
</dbReference>
<dbReference type="GO" id="GO:0003677">
    <property type="term" value="F:DNA binding"/>
    <property type="evidence" value="ECO:0007669"/>
    <property type="project" value="UniProtKB-KW"/>
</dbReference>
<dbReference type="GO" id="GO:0003899">
    <property type="term" value="F:DNA-directed RNA polymerase activity"/>
    <property type="evidence" value="ECO:0007669"/>
    <property type="project" value="InterPro"/>
</dbReference>
<dbReference type="GO" id="GO:0008270">
    <property type="term" value="F:zinc ion binding"/>
    <property type="evidence" value="ECO:0007669"/>
    <property type="project" value="UniProtKB-UniRule"/>
</dbReference>
<dbReference type="GO" id="GO:0006269">
    <property type="term" value="P:DNA replication, synthesis of primer"/>
    <property type="evidence" value="ECO:0007669"/>
    <property type="project" value="UniProtKB-UniRule"/>
</dbReference>
<dbReference type="CDD" id="cd03364">
    <property type="entry name" value="TOPRIM_DnaG_primases"/>
    <property type="match status" value="1"/>
</dbReference>
<dbReference type="FunFam" id="3.40.1360.10:FF:000002">
    <property type="entry name" value="DNA primase"/>
    <property type="match status" value="1"/>
</dbReference>
<dbReference type="FunFam" id="3.90.580.10:FF:000001">
    <property type="entry name" value="DNA primase"/>
    <property type="match status" value="1"/>
</dbReference>
<dbReference type="Gene3D" id="3.40.1360.10">
    <property type="match status" value="1"/>
</dbReference>
<dbReference type="Gene3D" id="3.90.980.10">
    <property type="entry name" value="DNA primase, catalytic core, N-terminal domain"/>
    <property type="match status" value="1"/>
</dbReference>
<dbReference type="Gene3D" id="3.90.580.10">
    <property type="entry name" value="Zinc finger, CHC2-type domain"/>
    <property type="match status" value="1"/>
</dbReference>
<dbReference type="HAMAP" id="MF_00974">
    <property type="entry name" value="DNA_primase_DnaG"/>
    <property type="match status" value="1"/>
</dbReference>
<dbReference type="InterPro" id="IPR037068">
    <property type="entry name" value="DNA_primase_core_N_sf"/>
</dbReference>
<dbReference type="InterPro" id="IPR006295">
    <property type="entry name" value="DNA_primase_DnaG"/>
</dbReference>
<dbReference type="InterPro" id="IPR036977">
    <property type="entry name" value="DNA_primase_Znf_CHC2"/>
</dbReference>
<dbReference type="InterPro" id="IPR030846">
    <property type="entry name" value="DnaG_bac"/>
</dbReference>
<dbReference type="InterPro" id="IPR013264">
    <property type="entry name" value="DNAG_N"/>
</dbReference>
<dbReference type="InterPro" id="IPR050219">
    <property type="entry name" value="DnaG_primase"/>
</dbReference>
<dbReference type="InterPro" id="IPR034151">
    <property type="entry name" value="TOPRIM_DnaG_bac"/>
</dbReference>
<dbReference type="InterPro" id="IPR006171">
    <property type="entry name" value="TOPRIM_dom"/>
</dbReference>
<dbReference type="InterPro" id="IPR002694">
    <property type="entry name" value="Znf_CHC2"/>
</dbReference>
<dbReference type="NCBIfam" id="TIGR01391">
    <property type="entry name" value="dnaG"/>
    <property type="match status" value="1"/>
</dbReference>
<dbReference type="PANTHER" id="PTHR30313">
    <property type="entry name" value="DNA PRIMASE"/>
    <property type="match status" value="1"/>
</dbReference>
<dbReference type="PANTHER" id="PTHR30313:SF2">
    <property type="entry name" value="DNA PRIMASE"/>
    <property type="match status" value="1"/>
</dbReference>
<dbReference type="Pfam" id="PF08275">
    <property type="entry name" value="DNAG_N"/>
    <property type="match status" value="1"/>
</dbReference>
<dbReference type="Pfam" id="PF13155">
    <property type="entry name" value="Toprim_2"/>
    <property type="match status" value="1"/>
</dbReference>
<dbReference type="Pfam" id="PF01807">
    <property type="entry name" value="Zn_ribbon_DnaG"/>
    <property type="match status" value="1"/>
</dbReference>
<dbReference type="PIRSF" id="PIRSF002811">
    <property type="entry name" value="DnaG"/>
    <property type="match status" value="1"/>
</dbReference>
<dbReference type="SMART" id="SM00493">
    <property type="entry name" value="TOPRIM"/>
    <property type="match status" value="1"/>
</dbReference>
<dbReference type="SMART" id="SM00400">
    <property type="entry name" value="ZnF_CHCC"/>
    <property type="match status" value="1"/>
</dbReference>
<dbReference type="SUPFAM" id="SSF56731">
    <property type="entry name" value="DNA primase core"/>
    <property type="match status" value="1"/>
</dbReference>
<dbReference type="SUPFAM" id="SSF57783">
    <property type="entry name" value="Zinc beta-ribbon"/>
    <property type="match status" value="1"/>
</dbReference>
<dbReference type="PROSITE" id="PS50880">
    <property type="entry name" value="TOPRIM"/>
    <property type="match status" value="1"/>
</dbReference>
<keyword id="KW-0235">DNA replication</keyword>
<keyword id="KW-0238">DNA-binding</keyword>
<keyword id="KW-0240">DNA-directed RNA polymerase</keyword>
<keyword id="KW-0460">Magnesium</keyword>
<keyword id="KW-0479">Metal-binding</keyword>
<keyword id="KW-0548">Nucleotidyltransferase</keyword>
<keyword id="KW-0639">Primosome</keyword>
<keyword id="KW-0804">Transcription</keyword>
<keyword id="KW-0808">Transferase</keyword>
<keyword id="KW-0862">Zinc</keyword>
<keyword id="KW-0863">Zinc-finger</keyword>
<protein>
    <recommendedName>
        <fullName evidence="1">DNA primase</fullName>
        <ecNumber evidence="1">2.7.7.101</ecNumber>
    </recommendedName>
</protein>
<feature type="chain" id="PRO_0000280942" description="DNA primase">
    <location>
        <begin position="1"/>
        <end position="595"/>
    </location>
</feature>
<feature type="domain" description="Toprim" evidence="1">
    <location>
        <begin position="250"/>
        <end position="332"/>
    </location>
</feature>
<feature type="zinc finger region" description="CHC2-type" evidence="1">
    <location>
        <begin position="38"/>
        <end position="62"/>
    </location>
</feature>
<feature type="binding site" evidence="1">
    <location>
        <position position="256"/>
    </location>
    <ligand>
        <name>Mg(2+)</name>
        <dbReference type="ChEBI" id="CHEBI:18420"/>
        <label>1</label>
        <note>catalytic</note>
    </ligand>
</feature>
<feature type="binding site" evidence="1">
    <location>
        <position position="300"/>
    </location>
    <ligand>
        <name>Mg(2+)</name>
        <dbReference type="ChEBI" id="CHEBI:18420"/>
        <label>1</label>
        <note>catalytic</note>
    </ligand>
</feature>
<feature type="binding site" evidence="1">
    <location>
        <position position="300"/>
    </location>
    <ligand>
        <name>Mg(2+)</name>
        <dbReference type="ChEBI" id="CHEBI:18420"/>
        <label>2</label>
    </ligand>
</feature>
<feature type="binding site" evidence="1">
    <location>
        <position position="302"/>
    </location>
    <ligand>
        <name>Mg(2+)</name>
        <dbReference type="ChEBI" id="CHEBI:18420"/>
        <label>2</label>
    </ligand>
</feature>
<comment type="function">
    <text evidence="1">RNA polymerase that catalyzes the synthesis of short RNA molecules used as primers for DNA polymerase during DNA replication.</text>
</comment>
<comment type="catalytic activity">
    <reaction evidence="1">
        <text>ssDNA + n NTP = ssDNA/pppN(pN)n-1 hybrid + (n-1) diphosphate.</text>
        <dbReference type="EC" id="2.7.7.101"/>
    </reaction>
</comment>
<comment type="cofactor">
    <cofactor evidence="1">
        <name>Zn(2+)</name>
        <dbReference type="ChEBI" id="CHEBI:29105"/>
    </cofactor>
    <text evidence="1">Binds 1 zinc ion per monomer.</text>
</comment>
<comment type="cofactor">
    <cofactor evidence="1">
        <name>Mg(2+)</name>
        <dbReference type="ChEBI" id="CHEBI:18420"/>
    </cofactor>
    <text evidence="1">Binds two Mg(2+) per subunit.</text>
</comment>
<comment type="subunit">
    <text evidence="1">Monomer. Interacts with DnaB.</text>
</comment>
<comment type="domain">
    <text evidence="1">Contains an N-terminal zinc-binding domain, a central core domain that contains the primase activity, and a C-terminal DnaB-binding domain.</text>
</comment>
<comment type="similarity">
    <text evidence="1">Belongs to the DnaG primase family.</text>
</comment>
<organism>
    <name type="scientific">Rickettsia conorii (strain ATCC VR-613 / Malish 7)</name>
    <dbReference type="NCBI Taxonomy" id="272944"/>
    <lineage>
        <taxon>Bacteria</taxon>
        <taxon>Pseudomonadati</taxon>
        <taxon>Pseudomonadota</taxon>
        <taxon>Alphaproteobacteria</taxon>
        <taxon>Rickettsiales</taxon>
        <taxon>Rickettsiaceae</taxon>
        <taxon>Rickettsieae</taxon>
        <taxon>Rickettsia</taxon>
        <taxon>spotted fever group</taxon>
    </lineage>
</organism>
<gene>
    <name evidence="1" type="primary">dnaG</name>
    <name type="ordered locus">RC1330</name>
</gene>
<name>DNAG_RICCN</name>
<sequence length="595" mass="68423">MRVAPEFYEFLRNRINISDVVRQKVALTRKSGNYVGLCPFHQEKTPSFTVSNSKRFFYCFGCKAAGDVIKFTSNISGLSYNESAIKLAIDYGIEIPKLTAKQKEFYEESDEILNILELANKFFRTQLTPEILHYLHERGITEETVKEFSIGFAPKNNKFEKFFHDKNIDIIKLGKAGLIGKRENGEIYNLFSNRITIPIRNIYNKIVGFGGRVLGEGLPKYLNSPETTVFQKSETLYGEHKAISSSYKKNHSILVEGYFDVIALHQAGFSETVASLGTSVTENHLHKLWRAGDEIILCLDGDNAGIKASIRTINLALPLINSEKKISFIRLPSGLDPDDAVNKNGADFFAKLIDKRISLSEMIWHIEYSGKSFKTAEEKANLEKNLKNYCSKISDSDLKVSYYRFFKDQIWQNLVTTQKKATTKNSNLAPIISSHGYSELEILEHAFCALLVKFPIILEEKDIRDFILNLNFNNKSLEEFRNWYLNEIIDNNVEASEITAIVEKTSFFDIFLLLSKTDNLFLDISFNKNNIRLDLLWQWLHKKYYLINLQQEYAITINSTDNHDFEKVLLYKKEILKIANELQVLNESFINHTIT</sequence>
<reference key="1">
    <citation type="journal article" date="2001" name="Science">
        <title>Mechanisms of evolution in Rickettsia conorii and R. prowazekii.</title>
        <authorList>
            <person name="Ogata H."/>
            <person name="Audic S."/>
            <person name="Renesto-Audiffren P."/>
            <person name="Fournier P.-E."/>
            <person name="Barbe V."/>
            <person name="Samson D."/>
            <person name="Roux V."/>
            <person name="Cossart P."/>
            <person name="Weissenbach J."/>
            <person name="Claverie J.-M."/>
            <person name="Raoult D."/>
        </authorList>
    </citation>
    <scope>NUCLEOTIDE SEQUENCE [LARGE SCALE GENOMIC DNA]</scope>
    <source>
        <strain>ATCC VR-613 / Malish 7</strain>
    </source>
</reference>